<keyword id="KW-0521">NADP</keyword>
<keyword id="KW-0547">Nucleotide-binding</keyword>
<keyword id="KW-0560">Oxidoreductase</keyword>
<proteinExistence type="inferred from homology"/>
<accession>A0A7L8UWS6</accession>
<name>FFSC_ASPFV</name>
<reference key="1">
    <citation type="journal article" date="2020" name="J. Antibiot.">
        <title>Discovery and characterization of a cytochalasan biosynthetic cluster from the marine-derived fungus Aspergillus flavipes CNL-338.</title>
        <authorList>
            <person name="Heard S.C."/>
            <person name="Wu G."/>
            <person name="Winter J.M."/>
        </authorList>
    </citation>
    <scope>NUCLEOTIDE SEQUENCE [GENOMIC DNA]</scope>
    <scope>FUNCTION</scope>
    <scope>PATHWAY</scope>
    <source>
        <strain>CNL-338</strain>
    </source>
</reference>
<dbReference type="EC" id="1.-.-.-" evidence="7"/>
<dbReference type="EMBL" id="MT586757">
    <property type="protein sequence ID" value="QOG08941.1"/>
    <property type="molecule type" value="Genomic_DNA"/>
</dbReference>
<dbReference type="SMR" id="A0A7L8UWS6"/>
<dbReference type="GO" id="GO:0000166">
    <property type="term" value="F:nucleotide binding"/>
    <property type="evidence" value="ECO:0007669"/>
    <property type="project" value="UniProtKB-KW"/>
</dbReference>
<dbReference type="GO" id="GO:0016651">
    <property type="term" value="F:oxidoreductase activity, acting on NAD(P)H"/>
    <property type="evidence" value="ECO:0007669"/>
    <property type="project" value="InterPro"/>
</dbReference>
<dbReference type="GO" id="GO:0019166">
    <property type="term" value="F:trans-2-enoyl-CoA reductase (NADPH) activity"/>
    <property type="evidence" value="ECO:0007669"/>
    <property type="project" value="UniProtKB-EC"/>
</dbReference>
<dbReference type="CDD" id="cd08249">
    <property type="entry name" value="enoyl_reductase_like"/>
    <property type="match status" value="1"/>
</dbReference>
<dbReference type="Gene3D" id="3.90.180.10">
    <property type="entry name" value="Medium-chain alcohol dehydrogenases, catalytic domain"/>
    <property type="match status" value="1"/>
</dbReference>
<dbReference type="Gene3D" id="3.40.50.720">
    <property type="entry name" value="NAD(P)-binding Rossmann-like Domain"/>
    <property type="match status" value="1"/>
</dbReference>
<dbReference type="InterPro" id="IPR013154">
    <property type="entry name" value="ADH-like_N"/>
</dbReference>
<dbReference type="InterPro" id="IPR011032">
    <property type="entry name" value="GroES-like_sf"/>
</dbReference>
<dbReference type="InterPro" id="IPR036291">
    <property type="entry name" value="NAD(P)-bd_dom_sf"/>
</dbReference>
<dbReference type="InterPro" id="IPR020843">
    <property type="entry name" value="PKS_ER"/>
</dbReference>
<dbReference type="InterPro" id="IPR047122">
    <property type="entry name" value="Trans-enoyl_RdTase-like"/>
</dbReference>
<dbReference type="PANTHER" id="PTHR45348">
    <property type="entry name" value="HYPOTHETICAL OXIDOREDUCTASE (EUROFUNG)"/>
    <property type="match status" value="1"/>
</dbReference>
<dbReference type="PANTHER" id="PTHR45348:SF1">
    <property type="entry name" value="TRANS-ENOYL REDUCTASE STHE"/>
    <property type="match status" value="1"/>
</dbReference>
<dbReference type="Pfam" id="PF08240">
    <property type="entry name" value="ADH_N"/>
    <property type="match status" value="1"/>
</dbReference>
<dbReference type="SMART" id="SM00829">
    <property type="entry name" value="PKS_ER"/>
    <property type="match status" value="1"/>
</dbReference>
<dbReference type="SUPFAM" id="SSF50129">
    <property type="entry name" value="GroES-like"/>
    <property type="match status" value="1"/>
</dbReference>
<dbReference type="SUPFAM" id="SSF51735">
    <property type="entry name" value="NAD(P)-binding Rossmann-fold domains"/>
    <property type="match status" value="1"/>
</dbReference>
<protein>
    <recommendedName>
        <fullName evidence="5">Trans-enoyl reductase ffsC</fullName>
        <ecNumber evidence="7">1.-.-.-</ecNumber>
    </recommendedName>
    <alternativeName>
        <fullName evidence="5">Cytochalasans biosynthesis cluster protein ffsC</fullName>
    </alternativeName>
</protein>
<gene>
    <name evidence="5" type="primary">ffsC</name>
</gene>
<comment type="function">
    <text evidence="1 4 7">Trans-enoyl reductase; part of the gene cluster that mediates the biosynthesis of the cytotoxic leucine-containing cytochalasans, including aspochalasin C, aspochalasin E, TMC-169, flavichalasine F, aspergillin PZ, aspochalasin M and flavichalasine G (PubMed:32913332). The first step in the pathway is catalyzed by the hybrid PKS-NRPS ffsA that utilizes 8 units of malonyl-CoA to iteratively assemble the octaketide chain before addition of L-leucine by the C-terminal NRPS modules (PubMed:32913332). Because ffsA lacks a designated enoylreductase (ER) domain, the required activity is provided the enoyl reductase fssC (Probable). The methyltransferase (MT) domain of ffsA catalyzes the alpha-methylation at C10 and C14 using S-adenosyl-L-methionine as the methyl-donating cosubstrate (Probable). Reduction by the hydrolyase ffsE, followed by dehydration and intra-molecular Diels-Alder cyclization by the Diels-Alderase ffsF then yield the required isoindolone-fused macrocycle (By similarity). A number of oxidative steps catalyzed by the tailoring cytochrome P450 monooxygenase ffsD, the FAD-linked oxidoreductase ffsJ and the short-chain dehydrogenase/reductase ffsI, are further required to afford the final products (Probable).</text>
</comment>
<comment type="pathway">
    <text evidence="7">Mycotoxin biosynthesis.</text>
</comment>
<comment type="subunit">
    <text evidence="2">Monomer.</text>
</comment>
<comment type="similarity">
    <text evidence="6">Belongs to the zinc-containing alcohol dehydrogenase family.</text>
</comment>
<evidence type="ECO:0000250" key="1">
    <source>
        <dbReference type="UniProtKB" id="Q0V6Q3"/>
    </source>
</evidence>
<evidence type="ECO:0000250" key="2">
    <source>
        <dbReference type="UniProtKB" id="Q9Y7D0"/>
    </source>
</evidence>
<evidence type="ECO:0000255" key="3"/>
<evidence type="ECO:0000269" key="4">
    <source>
    </source>
</evidence>
<evidence type="ECO:0000303" key="5">
    <source>
    </source>
</evidence>
<evidence type="ECO:0000305" key="6"/>
<evidence type="ECO:0000305" key="7">
    <source>
    </source>
</evidence>
<organism>
    <name type="scientific">Aspergillus flavipes</name>
    <dbReference type="NCBI Taxonomy" id="41900"/>
    <lineage>
        <taxon>Eukaryota</taxon>
        <taxon>Fungi</taxon>
        <taxon>Dikarya</taxon>
        <taxon>Ascomycota</taxon>
        <taxon>Pezizomycotina</taxon>
        <taxon>Eurotiomycetes</taxon>
        <taxon>Eurotiomycetidae</taxon>
        <taxon>Eurotiales</taxon>
        <taxon>Aspergillaceae</taxon>
        <taxon>Aspergillus</taxon>
        <taxon>Aspergillus subgen. Circumdati</taxon>
    </lineage>
</organism>
<feature type="chain" id="PRO_0000454525" description="Trans-enoyl reductase ffsC">
    <location>
        <begin position="1"/>
        <end position="367"/>
    </location>
</feature>
<feature type="binding site" evidence="2">
    <location>
        <begin position="55"/>
        <end position="58"/>
    </location>
    <ligand>
        <name>NADP(+)</name>
        <dbReference type="ChEBI" id="CHEBI:58349"/>
    </ligand>
</feature>
<feature type="binding site" evidence="3">
    <location>
        <begin position="143"/>
        <end position="150"/>
    </location>
    <ligand>
        <name>substrate</name>
    </ligand>
</feature>
<feature type="binding site" evidence="2">
    <location>
        <begin position="203"/>
        <end position="206"/>
    </location>
    <ligand>
        <name>NADP(+)</name>
        <dbReference type="ChEBI" id="CHEBI:58349"/>
    </ligand>
</feature>
<feature type="binding site" evidence="2">
    <location>
        <position position="221"/>
    </location>
    <ligand>
        <name>NADP(+)</name>
        <dbReference type="ChEBI" id="CHEBI:58349"/>
    </ligand>
</feature>
<feature type="binding site" evidence="2">
    <location>
        <begin position="268"/>
        <end position="269"/>
    </location>
    <ligand>
        <name>NADP(+)</name>
        <dbReference type="ChEBI" id="CHEBI:58349"/>
    </ligand>
</feature>
<feature type="binding site" evidence="3">
    <location>
        <begin position="288"/>
        <end position="292"/>
    </location>
    <ligand>
        <name>substrate</name>
    </ligand>
</feature>
<feature type="binding site" evidence="2">
    <location>
        <begin position="357"/>
        <end position="358"/>
    </location>
    <ligand>
        <name>NADP(+)</name>
        <dbReference type="ChEBI" id="CHEBI:58349"/>
    </ligand>
</feature>
<sequence length="367" mass="39437">MSPARTLESSPLPTTQTAIIQGEGGILSIHHNAPLPTLRPDRILVKVAYVAINPCDWKMADRFPTPGCVDGCDFSGTVVALGSDWAKTGRFKIGDRVCGGVHGSNPIDQSTGCFADYVSADAQFTFHVPEYMGMEDAAAVGGTGIGTLGLALKRSLGLPGSPRDPVPESESVQVLVYAASTSVGTLATQLLRMSGHKPIGVCSAKNFDMVKSYGAVKLFDYHSPTCAQDIRAYTKNTLAHILDPITEPKTTELCYAAMGRAGGKYCALEAFAEEFCTRRVVKPELVMGMAILGGRIALDYGYESEADPEKRVFGVSWYEEMQELLDSGRLRNHPVRSFPGGFEGIMKGLHLLKTKQVSGEKLIVQLG</sequence>